<sequence>MKYRTHKCNELSLDHVGEHVRLSGWVHRYRNHGGVVFIDLRDRFGITQIVCRQEENPELHQLMDQVRSEWVLCVEGLVCARLEGMENPNLVTGSIEVEVSSLEVLSRAQNLPFSISDEHINVNEELRLTYRYLDMRRGDILDRLMCRHKVMLACRQYLDEQGFTEVVTPILGKSTPEGARDYLVPSRIYPGNFYALPQSPQLFKQILMVGGLDRYFQIATCFRDEDLRADRQPEFTQIDMEMSFGGPEDLFPVVEELVTRLFAVKGIELKAPFLRMTYQEAKDSYGTDKPDLRFGLRLKNCCEYARKFTFSIFLDQLAHGGTVKGFCVPGGADMSRKQLDIYTDFVKRYGSMGLVWIKKQDGGVSSNVAKFASEDVFQEMFEAFEAKDQDILLLIAAPEAVANQALDHLRRLIAKERQLYDSTQYNFVWITDFPLFAKEEGELCPEHHPFTAPLDEDISLLDSDPFAVRSSSYDLVLNGYEIASGSQRIHNPDLQNKIFALLKLSQESVKEKFGFFIDALSFGTPPHLGIALGLDRIMMVLTGAETIREVIAFPKTQKAGDLMMSAPSEILPIQLKELGLKL</sequence>
<protein>
    <recommendedName>
        <fullName evidence="1">Aspartate--tRNA(Asp/Asn) ligase</fullName>
        <ecNumber evidence="1">6.1.1.23</ecNumber>
    </recommendedName>
    <alternativeName>
        <fullName evidence="1">Aspartyl-tRNA synthetase</fullName>
        <shortName evidence="1">AspRS</shortName>
    </alternativeName>
    <alternativeName>
        <fullName evidence="1">Non-discriminating aspartyl-tRNA synthetase</fullName>
        <shortName evidence="1">ND-AspRS</shortName>
    </alternativeName>
</protein>
<accession>B0B9Z5</accession>
<proteinExistence type="inferred from homology"/>
<name>SYDND_CHLTB</name>
<keyword id="KW-0030">Aminoacyl-tRNA synthetase</keyword>
<keyword id="KW-0067">ATP-binding</keyword>
<keyword id="KW-0963">Cytoplasm</keyword>
<keyword id="KW-0436">Ligase</keyword>
<keyword id="KW-0547">Nucleotide-binding</keyword>
<keyword id="KW-0648">Protein biosynthesis</keyword>
<reference key="1">
    <citation type="journal article" date="2008" name="Genome Res.">
        <title>Chlamydia trachomatis: genome sequence analysis of lymphogranuloma venereum isolates.</title>
        <authorList>
            <person name="Thomson N.R."/>
            <person name="Holden M.T.G."/>
            <person name="Carder C."/>
            <person name="Lennard N."/>
            <person name="Lockey S.J."/>
            <person name="Marsh P."/>
            <person name="Skipp P."/>
            <person name="O'Connor C.D."/>
            <person name="Goodhead I."/>
            <person name="Norbertzcak H."/>
            <person name="Harris B."/>
            <person name="Ormond D."/>
            <person name="Rance R."/>
            <person name="Quail M.A."/>
            <person name="Parkhill J."/>
            <person name="Stephens R.S."/>
            <person name="Clarke I.N."/>
        </authorList>
    </citation>
    <scope>NUCLEOTIDE SEQUENCE [LARGE SCALE GENOMIC DNA]</scope>
    <source>
        <strain>UCH-1/proctitis</strain>
    </source>
</reference>
<organism>
    <name type="scientific">Chlamydia trachomatis serovar L2b (strain UCH-1/proctitis)</name>
    <dbReference type="NCBI Taxonomy" id="471473"/>
    <lineage>
        <taxon>Bacteria</taxon>
        <taxon>Pseudomonadati</taxon>
        <taxon>Chlamydiota</taxon>
        <taxon>Chlamydiia</taxon>
        <taxon>Chlamydiales</taxon>
        <taxon>Chlamydiaceae</taxon>
        <taxon>Chlamydia/Chlamydophila group</taxon>
        <taxon>Chlamydia</taxon>
    </lineage>
</organism>
<comment type="function">
    <text evidence="1">Aspartyl-tRNA synthetase with relaxed tRNA specificity since it is able to aspartylate not only its cognate tRNA(Asp) but also tRNA(Asn). Reaction proceeds in two steps: L-aspartate is first activated by ATP to form Asp-AMP and then transferred to the acceptor end of tRNA(Asp/Asn).</text>
</comment>
<comment type="catalytic activity">
    <reaction evidence="1">
        <text>tRNA(Asx) + L-aspartate + ATP = L-aspartyl-tRNA(Asx) + AMP + diphosphate</text>
        <dbReference type="Rhea" id="RHEA:18349"/>
        <dbReference type="Rhea" id="RHEA-COMP:9710"/>
        <dbReference type="Rhea" id="RHEA-COMP:9711"/>
        <dbReference type="ChEBI" id="CHEBI:29991"/>
        <dbReference type="ChEBI" id="CHEBI:30616"/>
        <dbReference type="ChEBI" id="CHEBI:33019"/>
        <dbReference type="ChEBI" id="CHEBI:78442"/>
        <dbReference type="ChEBI" id="CHEBI:78516"/>
        <dbReference type="ChEBI" id="CHEBI:456215"/>
        <dbReference type="EC" id="6.1.1.23"/>
    </reaction>
</comment>
<comment type="subunit">
    <text evidence="1">Homodimer.</text>
</comment>
<comment type="subcellular location">
    <subcellularLocation>
        <location evidence="1">Cytoplasm</location>
    </subcellularLocation>
</comment>
<comment type="similarity">
    <text evidence="1">Belongs to the class-II aminoacyl-tRNA synthetase family. Type 1 subfamily.</text>
</comment>
<gene>
    <name evidence="1" type="primary">aspS</name>
    <name type="ordered locus">CTLon_0799</name>
</gene>
<feature type="chain" id="PRO_1000090979" description="Aspartate--tRNA(Asp/Asn) ligase">
    <location>
        <begin position="1"/>
        <end position="582"/>
    </location>
</feature>
<feature type="region of interest" description="Aspartate" evidence="1">
    <location>
        <begin position="201"/>
        <end position="204"/>
    </location>
</feature>
<feature type="binding site" evidence="1">
    <location>
        <position position="177"/>
    </location>
    <ligand>
        <name>L-aspartate</name>
        <dbReference type="ChEBI" id="CHEBI:29991"/>
    </ligand>
</feature>
<feature type="binding site" evidence="1">
    <location>
        <begin position="223"/>
        <end position="225"/>
    </location>
    <ligand>
        <name>ATP</name>
        <dbReference type="ChEBI" id="CHEBI:30616"/>
    </ligand>
</feature>
<feature type="binding site" evidence="1">
    <location>
        <position position="223"/>
    </location>
    <ligand>
        <name>L-aspartate</name>
        <dbReference type="ChEBI" id="CHEBI:29991"/>
    </ligand>
</feature>
<feature type="binding site" evidence="1">
    <location>
        <position position="232"/>
    </location>
    <ligand>
        <name>ATP</name>
        <dbReference type="ChEBI" id="CHEBI:30616"/>
    </ligand>
</feature>
<feature type="binding site" evidence="1">
    <location>
        <position position="447"/>
    </location>
    <ligand>
        <name>L-aspartate</name>
        <dbReference type="ChEBI" id="CHEBI:29991"/>
    </ligand>
</feature>
<feature type="binding site" evidence="1">
    <location>
        <position position="481"/>
    </location>
    <ligand>
        <name>ATP</name>
        <dbReference type="ChEBI" id="CHEBI:30616"/>
    </ligand>
</feature>
<feature type="binding site" evidence="1">
    <location>
        <position position="488"/>
    </location>
    <ligand>
        <name>L-aspartate</name>
        <dbReference type="ChEBI" id="CHEBI:29991"/>
    </ligand>
</feature>
<feature type="binding site" evidence="1">
    <location>
        <begin position="533"/>
        <end position="536"/>
    </location>
    <ligand>
        <name>ATP</name>
        <dbReference type="ChEBI" id="CHEBI:30616"/>
    </ligand>
</feature>
<feature type="site" description="Important for tRNA non-discrimination" evidence="1">
    <location>
        <position position="32"/>
    </location>
</feature>
<feature type="site" description="Important for tRNA non-discrimination" evidence="1">
    <location>
        <position position="84"/>
    </location>
</feature>
<evidence type="ECO:0000255" key="1">
    <source>
        <dbReference type="HAMAP-Rule" id="MF_00044"/>
    </source>
</evidence>
<dbReference type="EC" id="6.1.1.23" evidence="1"/>
<dbReference type="EMBL" id="AM884177">
    <property type="protein sequence ID" value="CAP07196.1"/>
    <property type="molecule type" value="Genomic_DNA"/>
</dbReference>
<dbReference type="RefSeq" id="WP_009873886.1">
    <property type="nucleotide sequence ID" value="NC_010280.2"/>
</dbReference>
<dbReference type="SMR" id="B0B9Z5"/>
<dbReference type="KEGG" id="ctl:CTLon_0799"/>
<dbReference type="HOGENOM" id="CLU_014330_3_2_0"/>
<dbReference type="Proteomes" id="UP001154401">
    <property type="component" value="Chromosome"/>
</dbReference>
<dbReference type="GO" id="GO:0005737">
    <property type="term" value="C:cytoplasm"/>
    <property type="evidence" value="ECO:0007669"/>
    <property type="project" value="UniProtKB-SubCell"/>
</dbReference>
<dbReference type="GO" id="GO:0004815">
    <property type="term" value="F:aspartate-tRNA ligase activity"/>
    <property type="evidence" value="ECO:0007669"/>
    <property type="project" value="UniProtKB-UniRule"/>
</dbReference>
<dbReference type="GO" id="GO:0050560">
    <property type="term" value="F:aspartate-tRNA(Asn) ligase activity"/>
    <property type="evidence" value="ECO:0007669"/>
    <property type="project" value="UniProtKB-EC"/>
</dbReference>
<dbReference type="GO" id="GO:0005524">
    <property type="term" value="F:ATP binding"/>
    <property type="evidence" value="ECO:0007669"/>
    <property type="project" value="UniProtKB-UniRule"/>
</dbReference>
<dbReference type="GO" id="GO:0003676">
    <property type="term" value="F:nucleic acid binding"/>
    <property type="evidence" value="ECO:0007669"/>
    <property type="project" value="InterPro"/>
</dbReference>
<dbReference type="GO" id="GO:0006422">
    <property type="term" value="P:aspartyl-tRNA aminoacylation"/>
    <property type="evidence" value="ECO:0007669"/>
    <property type="project" value="UniProtKB-UniRule"/>
</dbReference>
<dbReference type="CDD" id="cd00777">
    <property type="entry name" value="AspRS_core"/>
    <property type="match status" value="1"/>
</dbReference>
<dbReference type="CDD" id="cd04317">
    <property type="entry name" value="EcAspRS_like_N"/>
    <property type="match status" value="1"/>
</dbReference>
<dbReference type="Gene3D" id="3.30.930.10">
    <property type="entry name" value="Bira Bifunctional Protein, Domain 2"/>
    <property type="match status" value="1"/>
</dbReference>
<dbReference type="Gene3D" id="3.30.1360.30">
    <property type="entry name" value="GAD-like domain"/>
    <property type="match status" value="1"/>
</dbReference>
<dbReference type="Gene3D" id="2.40.50.140">
    <property type="entry name" value="Nucleic acid-binding proteins"/>
    <property type="match status" value="1"/>
</dbReference>
<dbReference type="HAMAP" id="MF_00044">
    <property type="entry name" value="Asp_tRNA_synth_type1"/>
    <property type="match status" value="1"/>
</dbReference>
<dbReference type="InterPro" id="IPR004364">
    <property type="entry name" value="Aa-tRNA-synt_II"/>
</dbReference>
<dbReference type="InterPro" id="IPR006195">
    <property type="entry name" value="aa-tRNA-synth_II"/>
</dbReference>
<dbReference type="InterPro" id="IPR045864">
    <property type="entry name" value="aa-tRNA-synth_II/BPL/LPL"/>
</dbReference>
<dbReference type="InterPro" id="IPR004524">
    <property type="entry name" value="Asp-tRNA-ligase_1"/>
</dbReference>
<dbReference type="InterPro" id="IPR047089">
    <property type="entry name" value="Asp-tRNA-ligase_1_N"/>
</dbReference>
<dbReference type="InterPro" id="IPR002312">
    <property type="entry name" value="Asp/Asn-tRNA-synth_IIb"/>
</dbReference>
<dbReference type="InterPro" id="IPR047090">
    <property type="entry name" value="AspRS_core"/>
</dbReference>
<dbReference type="InterPro" id="IPR004115">
    <property type="entry name" value="GAD-like_sf"/>
</dbReference>
<dbReference type="InterPro" id="IPR029351">
    <property type="entry name" value="GAD_dom"/>
</dbReference>
<dbReference type="InterPro" id="IPR012340">
    <property type="entry name" value="NA-bd_OB-fold"/>
</dbReference>
<dbReference type="InterPro" id="IPR004365">
    <property type="entry name" value="NA-bd_OB_tRNA"/>
</dbReference>
<dbReference type="NCBIfam" id="TIGR00459">
    <property type="entry name" value="aspS_bact"/>
    <property type="match status" value="1"/>
</dbReference>
<dbReference type="NCBIfam" id="NF001750">
    <property type="entry name" value="PRK00476.1"/>
    <property type="match status" value="1"/>
</dbReference>
<dbReference type="PANTHER" id="PTHR22594:SF5">
    <property type="entry name" value="ASPARTATE--TRNA LIGASE, MITOCHONDRIAL"/>
    <property type="match status" value="1"/>
</dbReference>
<dbReference type="PANTHER" id="PTHR22594">
    <property type="entry name" value="ASPARTYL/LYSYL-TRNA SYNTHETASE"/>
    <property type="match status" value="1"/>
</dbReference>
<dbReference type="Pfam" id="PF02938">
    <property type="entry name" value="GAD"/>
    <property type="match status" value="1"/>
</dbReference>
<dbReference type="Pfam" id="PF00152">
    <property type="entry name" value="tRNA-synt_2"/>
    <property type="match status" value="1"/>
</dbReference>
<dbReference type="Pfam" id="PF01336">
    <property type="entry name" value="tRNA_anti-codon"/>
    <property type="match status" value="1"/>
</dbReference>
<dbReference type="PRINTS" id="PR01042">
    <property type="entry name" value="TRNASYNTHASP"/>
</dbReference>
<dbReference type="SUPFAM" id="SSF55681">
    <property type="entry name" value="Class II aaRS and biotin synthetases"/>
    <property type="match status" value="1"/>
</dbReference>
<dbReference type="SUPFAM" id="SSF55261">
    <property type="entry name" value="GAD domain-like"/>
    <property type="match status" value="1"/>
</dbReference>
<dbReference type="SUPFAM" id="SSF50249">
    <property type="entry name" value="Nucleic acid-binding proteins"/>
    <property type="match status" value="1"/>
</dbReference>
<dbReference type="PROSITE" id="PS50862">
    <property type="entry name" value="AA_TRNA_LIGASE_II"/>
    <property type="match status" value="1"/>
</dbReference>